<reference key="1">
    <citation type="submission" date="2009-03" db="EMBL/GenBank/DDBJ databases">
        <title>Complete genome sequence of Edwardsiella ictaluri 93-146.</title>
        <authorList>
            <person name="Williams M.L."/>
            <person name="Gillaspy A.F."/>
            <person name="Dyer D.W."/>
            <person name="Thune R.L."/>
            <person name="Waldbieser G.C."/>
            <person name="Schuster S.C."/>
            <person name="Gipson J."/>
            <person name="Zaitshik J."/>
            <person name="Landry C."/>
            <person name="Lawrence M.L."/>
        </authorList>
    </citation>
    <scope>NUCLEOTIDE SEQUENCE [LARGE SCALE GENOMIC DNA]</scope>
    <source>
        <strain>93-146</strain>
    </source>
</reference>
<comment type="function">
    <text evidence="1">Necessary for formate dehydrogenase activity.</text>
</comment>
<comment type="subcellular location">
    <subcellularLocation>
        <location evidence="1">Cytoplasm</location>
    </subcellularLocation>
</comment>
<comment type="similarity">
    <text evidence="1">Belongs to the FdhE family.</text>
</comment>
<evidence type="ECO:0000255" key="1">
    <source>
        <dbReference type="HAMAP-Rule" id="MF_00611"/>
    </source>
</evidence>
<keyword id="KW-0963">Cytoplasm</keyword>
<dbReference type="EMBL" id="CP001600">
    <property type="protein sequence ID" value="ACR70845.1"/>
    <property type="molecule type" value="Genomic_DNA"/>
</dbReference>
<dbReference type="RefSeq" id="WP_015872883.1">
    <property type="nucleotide sequence ID" value="NZ_CP169062.1"/>
</dbReference>
<dbReference type="SMR" id="C5BB03"/>
<dbReference type="STRING" id="67780.B6E78_10200"/>
<dbReference type="GeneID" id="69540551"/>
<dbReference type="KEGG" id="eic:NT01EI_3717"/>
<dbReference type="PATRIC" id="fig|634503.3.peg.3318"/>
<dbReference type="HOGENOM" id="CLU_055275_0_0_6"/>
<dbReference type="OrthoDB" id="9794151at2"/>
<dbReference type="Proteomes" id="UP000001485">
    <property type="component" value="Chromosome"/>
</dbReference>
<dbReference type="GO" id="GO:0005829">
    <property type="term" value="C:cytosol"/>
    <property type="evidence" value="ECO:0007669"/>
    <property type="project" value="TreeGrafter"/>
</dbReference>
<dbReference type="GO" id="GO:0008199">
    <property type="term" value="F:ferric iron binding"/>
    <property type="evidence" value="ECO:0007669"/>
    <property type="project" value="TreeGrafter"/>
</dbReference>
<dbReference type="GO" id="GO:0051604">
    <property type="term" value="P:protein maturation"/>
    <property type="evidence" value="ECO:0007669"/>
    <property type="project" value="TreeGrafter"/>
</dbReference>
<dbReference type="CDD" id="cd16341">
    <property type="entry name" value="FdhE"/>
    <property type="match status" value="1"/>
</dbReference>
<dbReference type="FunFam" id="3.90.1670.10:FF:000001">
    <property type="entry name" value="Protein FdhE"/>
    <property type="match status" value="1"/>
</dbReference>
<dbReference type="Gene3D" id="3.90.1670.10">
    <property type="entry name" value="FdhE-like domain"/>
    <property type="match status" value="1"/>
</dbReference>
<dbReference type="HAMAP" id="MF_00611">
    <property type="entry name" value="FdeH"/>
    <property type="match status" value="1"/>
</dbReference>
<dbReference type="InterPro" id="IPR024064">
    <property type="entry name" value="FdhE-like_sf"/>
</dbReference>
<dbReference type="InterPro" id="IPR056796">
    <property type="entry name" value="FdhE_C"/>
</dbReference>
<dbReference type="InterPro" id="IPR056797">
    <property type="entry name" value="FdhE_central"/>
</dbReference>
<dbReference type="InterPro" id="IPR056774">
    <property type="entry name" value="FdhE_N"/>
</dbReference>
<dbReference type="InterPro" id="IPR006452">
    <property type="entry name" value="Formate_DH_accessory"/>
</dbReference>
<dbReference type="NCBIfam" id="TIGR01562">
    <property type="entry name" value="FdhE"/>
    <property type="match status" value="1"/>
</dbReference>
<dbReference type="NCBIfam" id="NF002925">
    <property type="entry name" value="PRK03564.1"/>
    <property type="match status" value="1"/>
</dbReference>
<dbReference type="PANTHER" id="PTHR37689">
    <property type="entry name" value="PROTEIN FDHE"/>
    <property type="match status" value="1"/>
</dbReference>
<dbReference type="PANTHER" id="PTHR37689:SF1">
    <property type="entry name" value="PROTEIN FDHE"/>
    <property type="match status" value="1"/>
</dbReference>
<dbReference type="Pfam" id="PF24860">
    <property type="entry name" value="FdhE_C"/>
    <property type="match status" value="1"/>
</dbReference>
<dbReference type="Pfam" id="PF24859">
    <property type="entry name" value="FdhE_central"/>
    <property type="match status" value="1"/>
</dbReference>
<dbReference type="Pfam" id="PF04216">
    <property type="entry name" value="FdhE_N"/>
    <property type="match status" value="1"/>
</dbReference>
<dbReference type="PIRSF" id="PIRSF018296">
    <property type="entry name" value="Format_dh_formtn"/>
    <property type="match status" value="1"/>
</dbReference>
<dbReference type="SUPFAM" id="SSF144020">
    <property type="entry name" value="FdhE-like"/>
    <property type="match status" value="1"/>
</dbReference>
<organism>
    <name type="scientific">Edwardsiella ictaluri (strain 93-146)</name>
    <dbReference type="NCBI Taxonomy" id="634503"/>
    <lineage>
        <taxon>Bacteria</taxon>
        <taxon>Pseudomonadati</taxon>
        <taxon>Pseudomonadota</taxon>
        <taxon>Gammaproteobacteria</taxon>
        <taxon>Enterobacterales</taxon>
        <taxon>Hafniaceae</taxon>
        <taxon>Edwardsiella</taxon>
    </lineage>
</organism>
<name>FDHE_EDWI9</name>
<feature type="chain" id="PRO_1000212266" description="Protein FdhE homolog">
    <location>
        <begin position="1"/>
        <end position="308"/>
    </location>
</feature>
<sequence>MSIRIHPQEQIDAKSRSGALGPIAPLLLPNLQRLYSQRAERLRMLADGHPLTDYLCFAATLADAQQQALFDNPLTLDLAPVVANAAANGTPPLATQTFARTPHWQRLLLAIIAELRPQAPVHVLPVLEGLEKCAAGEREALASALLAGDYAAVGSDRALFLWAALSLYWAQMASQLPGRAQAEYGEQRHVCPVCGSMPVSSVVHIGGSNGLRYLHCSLCESEWHMVRVKCSNCEESRDLSYWSLESEQAAVKAESCGDCGSYLKILYQEKDSGVDAVADDLATLLLDAKMEEAGFARSSLNPFLFPGE</sequence>
<protein>
    <recommendedName>
        <fullName evidence="1">Protein FdhE homolog</fullName>
    </recommendedName>
</protein>
<proteinExistence type="inferred from homology"/>
<accession>C5BB03</accession>
<gene>
    <name evidence="1" type="primary">fdhE</name>
    <name type="ordered locus">NT01EI_3717</name>
</gene>